<feature type="signal peptide" evidence="4">
    <location>
        <begin position="1"/>
        <end position="24"/>
    </location>
</feature>
<feature type="chain" id="PRO_0000320573" description="Netrin-1">
    <location>
        <begin position="25"/>
        <end position="600"/>
    </location>
</feature>
<feature type="domain" description="Laminin N-terminal" evidence="7">
    <location>
        <begin position="47"/>
        <end position="284"/>
    </location>
</feature>
<feature type="domain" description="Laminin EGF-like 1" evidence="6">
    <location>
        <begin position="285"/>
        <end position="340"/>
    </location>
</feature>
<feature type="domain" description="Laminin EGF-like 2" evidence="6">
    <location>
        <begin position="341"/>
        <end position="403"/>
    </location>
</feature>
<feature type="domain" description="Laminin EGF-like 3" evidence="6">
    <location>
        <begin position="404"/>
        <end position="453"/>
    </location>
</feature>
<feature type="domain" description="NTR" evidence="5">
    <location>
        <begin position="472"/>
        <end position="600"/>
    </location>
</feature>
<feature type="short sequence motif" description="Cell attachment site" evidence="4">
    <location>
        <begin position="530"/>
        <end position="532"/>
    </location>
</feature>
<feature type="glycosylation site" description="N-linked (GlcNAc...) asparagine" evidence="4">
    <location>
        <position position="95"/>
    </location>
</feature>
<feature type="glycosylation site" description="N-linked (GlcNAc...) asparagine" evidence="4">
    <location>
        <position position="116"/>
    </location>
</feature>
<feature type="glycosylation site" description="N-linked (GlcNAc...) asparagine" evidence="4">
    <location>
        <position position="131"/>
    </location>
</feature>
<feature type="glycosylation site" description="N-linked (GlcNAc...) asparagine" evidence="4">
    <location>
        <position position="417"/>
    </location>
</feature>
<feature type="disulfide bond" evidence="1">
    <location>
        <begin position="119"/>
        <end position="152"/>
    </location>
</feature>
<feature type="disulfide bond" evidence="1">
    <location>
        <begin position="285"/>
        <end position="294"/>
    </location>
</feature>
<feature type="disulfide bond" evidence="1">
    <location>
        <begin position="287"/>
        <end position="304"/>
    </location>
</feature>
<feature type="disulfide bond" evidence="1">
    <location>
        <begin position="306"/>
        <end position="315"/>
    </location>
</feature>
<feature type="disulfide bond" evidence="1">
    <location>
        <begin position="318"/>
        <end position="338"/>
    </location>
</feature>
<feature type="disulfide bond" evidence="1">
    <location>
        <begin position="341"/>
        <end position="350"/>
    </location>
</feature>
<feature type="disulfide bond" evidence="1">
    <location>
        <begin position="343"/>
        <end position="368"/>
    </location>
</feature>
<feature type="disulfide bond" evidence="1">
    <location>
        <begin position="371"/>
        <end position="380"/>
    </location>
</feature>
<feature type="disulfide bond" evidence="1">
    <location>
        <begin position="383"/>
        <end position="401"/>
    </location>
</feature>
<feature type="disulfide bond" evidence="1">
    <location>
        <begin position="404"/>
        <end position="416"/>
    </location>
</feature>
<feature type="disulfide bond" evidence="1">
    <location>
        <begin position="406"/>
        <end position="423"/>
    </location>
</feature>
<feature type="disulfide bond" evidence="1">
    <location>
        <begin position="425"/>
        <end position="434"/>
    </location>
</feature>
<feature type="disulfide bond" evidence="1">
    <location>
        <begin position="437"/>
        <end position="451"/>
    </location>
</feature>
<feature type="disulfide bond" evidence="1">
    <location>
        <begin position="472"/>
        <end position="544"/>
    </location>
</feature>
<name>NET1_PIG</name>
<comment type="function">
    <text evidence="2 3">Netrins control guidance of CNS commissural axons and peripheral motor axons. Its association with either DCC or some UNC5 receptors will lead to axon attraction or repulsion, respectively. Binding to UNC5C might cause dissociation of UNC5C from polymerized TUBB3 in microtubules and thereby lead to increased microtubule dynamics and axon repulsion (By similarity). Involved in dorsal root ganglion axon projection towards the spinal cord (By similarity). It also serves as a survival factor via its association with its receptors which prevent the initiation of apoptosis. Involved in colorectal tumorigenesis by regulating apoptosis (By similarity).</text>
</comment>
<comment type="subunit">
    <text evidence="2 3">Binds to its receptors; DCC, UNC5A, UNC5B, UNC5C and probably UNC5D. Binds to its receptor; DSCAM (By similarity). Interacts with APP (By similarity).</text>
</comment>
<comment type="subcellular location">
    <subcellularLocation>
        <location evidence="3">Secreted</location>
    </subcellularLocation>
    <subcellularLocation>
        <location evidence="3">Cytoplasm</location>
    </subcellularLocation>
    <text evidence="3">Mainly secreted.</text>
</comment>
<keyword id="KW-0053">Apoptosis</keyword>
<keyword id="KW-0963">Cytoplasm</keyword>
<keyword id="KW-1015">Disulfide bond</keyword>
<keyword id="KW-0325">Glycoprotein</keyword>
<keyword id="KW-0424">Laminin EGF-like domain</keyword>
<keyword id="KW-1185">Reference proteome</keyword>
<keyword id="KW-0677">Repeat</keyword>
<keyword id="KW-0964">Secreted</keyword>
<keyword id="KW-0732">Signal</keyword>
<organism>
    <name type="scientific">Sus scrofa</name>
    <name type="common">Pig</name>
    <dbReference type="NCBI Taxonomy" id="9823"/>
    <lineage>
        <taxon>Eukaryota</taxon>
        <taxon>Metazoa</taxon>
        <taxon>Chordata</taxon>
        <taxon>Craniata</taxon>
        <taxon>Vertebrata</taxon>
        <taxon>Euteleostomi</taxon>
        <taxon>Mammalia</taxon>
        <taxon>Eutheria</taxon>
        <taxon>Laurasiatheria</taxon>
        <taxon>Artiodactyla</taxon>
        <taxon>Suina</taxon>
        <taxon>Suidae</taxon>
        <taxon>Sus</taxon>
    </lineage>
</organism>
<gene>
    <name type="primary">NTN1</name>
</gene>
<sequence length="600" mass="67372">MMRAMWEALAALAAVSCLVGAVRGGPGLSMFAGQAAQPDPCSDENGHPRRCIPDFVNAAFGKDVRVSSTCGRPPARYCVVSERGEERLRSCHLCNASDPKKAHPPAFLTDLNNPHNLTCWQSENYLQFPHNVTLTLSLGKKFEVTYVSLQFCSPRPESMAIYKSMDYGRTWVPFQFYSTQCRKMYNRPHRAPITKQNEQEAVCTDSHTDMRPLSGGLIAFSTLDGRPSAHDFDNSPVLQDWVTATDIRVAFSRLHTFGDENEDDSELARDSYFYAVSDLQVGGRCKCNGHAARCVRDRDDSLVCDCRHNTAGPECDRCKPFHYDRPWQRATAREANECVACNCNLHARRCRFNMELYKLSGRKSGGVCLNCRHNTAGRHCHYCKEGYFRDLGKPITHRKACKACDCHPVGAAGKTCNQTTGQCPCKDGVTGVTCNRCAKGYQQSRSPIAPCIKIPVAPPTTAASSVEEPEDCDSYCKASKGKLKINMKKYCKKDYAVQIHILKADKAGDWWKFTVNIISVYKQGASRIRRGDQNLWIRSRDIACKCPKIKPLKKYLLLGNAEDSPDQSGIVADKSSLVIQWRDTWARRLRKFQQREKKEL</sequence>
<reference key="1">
    <citation type="submission" date="2006-01" db="EMBL/GenBank/DDBJ databases">
        <title>Molecular cloning of porcine (Sus scrofa) p53-regulated receptor for death and life (p53RDL1) and netrin-1.</title>
        <authorList>
            <person name="Maeda A."/>
            <person name="Matsuda F."/>
            <person name="Goto Y."/>
            <person name="Cheng Y."/>
            <person name="Manabe N."/>
        </authorList>
    </citation>
    <scope>NUCLEOTIDE SEQUENCE [MRNA]</scope>
</reference>
<accession>Q2HXW4</accession>
<dbReference type="EMBL" id="DQ368597">
    <property type="protein sequence ID" value="ABC86678.1"/>
    <property type="molecule type" value="mRNA"/>
</dbReference>
<dbReference type="RefSeq" id="NP_001038013.1">
    <property type="nucleotide sequence ID" value="NM_001044548.1"/>
</dbReference>
<dbReference type="SMR" id="Q2HXW4"/>
<dbReference type="FunCoup" id="Q2HXW4">
    <property type="interactions" value="47"/>
</dbReference>
<dbReference type="STRING" id="9823.ENSSSCP00000066172"/>
<dbReference type="GlyCosmos" id="Q2HXW4">
    <property type="glycosylation" value="4 sites, No reported glycans"/>
</dbReference>
<dbReference type="GlyGen" id="Q2HXW4">
    <property type="glycosylation" value="4 sites"/>
</dbReference>
<dbReference type="PaxDb" id="9823-ENSSSCP00000019063"/>
<dbReference type="GeneID" id="733599"/>
<dbReference type="KEGG" id="ssc:733599"/>
<dbReference type="CTD" id="9423"/>
<dbReference type="eggNOG" id="KOG3512">
    <property type="taxonomic scope" value="Eukaryota"/>
</dbReference>
<dbReference type="InParanoid" id="Q2HXW4"/>
<dbReference type="OrthoDB" id="9972745at2759"/>
<dbReference type="ChiTaRS" id="UNC-6">
    <property type="organism name" value="pig"/>
</dbReference>
<dbReference type="Proteomes" id="UP000008227">
    <property type="component" value="Unplaced"/>
</dbReference>
<dbReference type="Proteomes" id="UP000314985">
    <property type="component" value="Unplaced"/>
</dbReference>
<dbReference type="Proteomes" id="UP000694570">
    <property type="component" value="Unplaced"/>
</dbReference>
<dbReference type="Proteomes" id="UP000694571">
    <property type="component" value="Unplaced"/>
</dbReference>
<dbReference type="Proteomes" id="UP000694720">
    <property type="component" value="Unplaced"/>
</dbReference>
<dbReference type="Proteomes" id="UP000694722">
    <property type="component" value="Unplaced"/>
</dbReference>
<dbReference type="Proteomes" id="UP000694723">
    <property type="component" value="Unplaced"/>
</dbReference>
<dbReference type="Proteomes" id="UP000694724">
    <property type="component" value="Unplaced"/>
</dbReference>
<dbReference type="Proteomes" id="UP000694725">
    <property type="component" value="Unplaced"/>
</dbReference>
<dbReference type="Proteomes" id="UP000694726">
    <property type="component" value="Unplaced"/>
</dbReference>
<dbReference type="Proteomes" id="UP000694727">
    <property type="component" value="Unplaced"/>
</dbReference>
<dbReference type="Proteomes" id="UP000694728">
    <property type="component" value="Unplaced"/>
</dbReference>
<dbReference type="GO" id="GO:0005604">
    <property type="term" value="C:basement membrane"/>
    <property type="evidence" value="ECO:0000318"/>
    <property type="project" value="GO_Central"/>
</dbReference>
<dbReference type="GO" id="GO:0005737">
    <property type="term" value="C:cytoplasm"/>
    <property type="evidence" value="ECO:0007669"/>
    <property type="project" value="UniProtKB-SubCell"/>
</dbReference>
<dbReference type="GO" id="GO:0005576">
    <property type="term" value="C:extracellular region"/>
    <property type="evidence" value="ECO:0000250"/>
    <property type="project" value="UniProtKB"/>
</dbReference>
<dbReference type="GO" id="GO:0009887">
    <property type="term" value="P:animal organ morphogenesis"/>
    <property type="evidence" value="ECO:0000318"/>
    <property type="project" value="GO_Central"/>
</dbReference>
<dbReference type="GO" id="GO:0006915">
    <property type="term" value="P:apoptotic process"/>
    <property type="evidence" value="ECO:0007669"/>
    <property type="project" value="UniProtKB-KW"/>
</dbReference>
<dbReference type="GO" id="GO:0032488">
    <property type="term" value="P:Cdc42 protein signal transduction"/>
    <property type="evidence" value="ECO:0000250"/>
    <property type="project" value="UniProtKB"/>
</dbReference>
<dbReference type="GO" id="GO:0061643">
    <property type="term" value="P:chemorepulsion of axon"/>
    <property type="evidence" value="ECO:0000250"/>
    <property type="project" value="UniProtKB"/>
</dbReference>
<dbReference type="GO" id="GO:0016358">
    <property type="term" value="P:dendrite development"/>
    <property type="evidence" value="ECO:0000318"/>
    <property type="project" value="GO_Central"/>
</dbReference>
<dbReference type="GO" id="GO:0008045">
    <property type="term" value="P:motor neuron axon guidance"/>
    <property type="evidence" value="ECO:0000318"/>
    <property type="project" value="GO_Central"/>
</dbReference>
<dbReference type="GO" id="GO:0045773">
    <property type="term" value="P:positive regulation of axon extension"/>
    <property type="evidence" value="ECO:0000250"/>
    <property type="project" value="UniProtKB"/>
</dbReference>
<dbReference type="GO" id="GO:2000147">
    <property type="term" value="P:positive regulation of cell motility"/>
    <property type="evidence" value="ECO:0000250"/>
    <property type="project" value="UniProtKB"/>
</dbReference>
<dbReference type="GO" id="GO:0007265">
    <property type="term" value="P:Ras protein signal transduction"/>
    <property type="evidence" value="ECO:0000250"/>
    <property type="project" value="UniProtKB"/>
</dbReference>
<dbReference type="GO" id="GO:0006930">
    <property type="term" value="P:substrate-dependent cell migration, cell extension"/>
    <property type="evidence" value="ECO:0000250"/>
    <property type="project" value="UniProtKB"/>
</dbReference>
<dbReference type="GO" id="GO:0009888">
    <property type="term" value="P:tissue development"/>
    <property type="evidence" value="ECO:0000318"/>
    <property type="project" value="GO_Central"/>
</dbReference>
<dbReference type="CDD" id="cd00055">
    <property type="entry name" value="EGF_Lam"/>
    <property type="match status" value="3"/>
</dbReference>
<dbReference type="CDD" id="cd03579">
    <property type="entry name" value="NTR_netrin-1_like"/>
    <property type="match status" value="1"/>
</dbReference>
<dbReference type="FunFam" id="2.10.25.10:FF:000081">
    <property type="entry name" value="Netrin 1"/>
    <property type="match status" value="1"/>
</dbReference>
<dbReference type="FunFam" id="2.40.50.120:FF:000001">
    <property type="entry name" value="Netrin 1"/>
    <property type="match status" value="1"/>
</dbReference>
<dbReference type="FunFam" id="2.60.120.260:FF:000015">
    <property type="entry name" value="Netrin 1"/>
    <property type="match status" value="1"/>
</dbReference>
<dbReference type="FunFam" id="2.10.25.10:FF:000048">
    <property type="entry name" value="Netrin 3"/>
    <property type="match status" value="1"/>
</dbReference>
<dbReference type="Gene3D" id="2.40.50.120">
    <property type="match status" value="1"/>
</dbReference>
<dbReference type="Gene3D" id="2.60.120.260">
    <property type="entry name" value="Galactose-binding domain-like"/>
    <property type="match status" value="1"/>
</dbReference>
<dbReference type="Gene3D" id="2.10.25.10">
    <property type="entry name" value="Laminin"/>
    <property type="match status" value="2"/>
</dbReference>
<dbReference type="InterPro" id="IPR008979">
    <property type="entry name" value="Galactose-bd-like_sf"/>
</dbReference>
<dbReference type="InterPro" id="IPR050440">
    <property type="entry name" value="Laminin/Netrin_ECM"/>
</dbReference>
<dbReference type="InterPro" id="IPR008211">
    <property type="entry name" value="Laminin_N"/>
</dbReference>
<dbReference type="InterPro" id="IPR002049">
    <property type="entry name" value="LE_dom"/>
</dbReference>
<dbReference type="InterPro" id="IPR056863">
    <property type="entry name" value="LMN_ATRN_NET-like_EGF"/>
</dbReference>
<dbReference type="InterPro" id="IPR001134">
    <property type="entry name" value="Netrin_domain"/>
</dbReference>
<dbReference type="InterPro" id="IPR018933">
    <property type="entry name" value="Netrin_module_non-TIMP"/>
</dbReference>
<dbReference type="InterPro" id="IPR008993">
    <property type="entry name" value="TIMP-like_OB-fold"/>
</dbReference>
<dbReference type="PANTHER" id="PTHR10574:SF378">
    <property type="entry name" value="NETRIN-1"/>
    <property type="match status" value="1"/>
</dbReference>
<dbReference type="PANTHER" id="PTHR10574">
    <property type="entry name" value="NETRIN/LAMININ-RELATED"/>
    <property type="match status" value="1"/>
</dbReference>
<dbReference type="Pfam" id="PF00053">
    <property type="entry name" value="EGF_laminin"/>
    <property type="match status" value="1"/>
</dbReference>
<dbReference type="Pfam" id="PF24973">
    <property type="entry name" value="EGF_LMN_ATRN"/>
    <property type="match status" value="2"/>
</dbReference>
<dbReference type="Pfam" id="PF00055">
    <property type="entry name" value="Laminin_N"/>
    <property type="match status" value="1"/>
</dbReference>
<dbReference type="Pfam" id="PF01759">
    <property type="entry name" value="NTR"/>
    <property type="match status" value="1"/>
</dbReference>
<dbReference type="SMART" id="SM00643">
    <property type="entry name" value="C345C"/>
    <property type="match status" value="1"/>
</dbReference>
<dbReference type="SMART" id="SM00180">
    <property type="entry name" value="EGF_Lam"/>
    <property type="match status" value="3"/>
</dbReference>
<dbReference type="SMART" id="SM00136">
    <property type="entry name" value="LamNT"/>
    <property type="match status" value="1"/>
</dbReference>
<dbReference type="SUPFAM" id="SSF57196">
    <property type="entry name" value="EGF/Laminin"/>
    <property type="match status" value="3"/>
</dbReference>
<dbReference type="SUPFAM" id="SSF49785">
    <property type="entry name" value="Galactose-binding domain-like"/>
    <property type="match status" value="1"/>
</dbReference>
<dbReference type="SUPFAM" id="SSF50242">
    <property type="entry name" value="TIMP-like"/>
    <property type="match status" value="1"/>
</dbReference>
<dbReference type="PROSITE" id="PS00022">
    <property type="entry name" value="EGF_1"/>
    <property type="match status" value="2"/>
</dbReference>
<dbReference type="PROSITE" id="PS01248">
    <property type="entry name" value="EGF_LAM_1"/>
    <property type="match status" value="3"/>
</dbReference>
<dbReference type="PROSITE" id="PS50027">
    <property type="entry name" value="EGF_LAM_2"/>
    <property type="match status" value="3"/>
</dbReference>
<dbReference type="PROSITE" id="PS51117">
    <property type="entry name" value="LAMININ_NTER"/>
    <property type="match status" value="1"/>
</dbReference>
<dbReference type="PROSITE" id="PS50189">
    <property type="entry name" value="NTR"/>
    <property type="match status" value="1"/>
</dbReference>
<protein>
    <recommendedName>
        <fullName>Netrin-1</fullName>
    </recommendedName>
</protein>
<evidence type="ECO:0000250" key="1"/>
<evidence type="ECO:0000250" key="2">
    <source>
        <dbReference type="UniProtKB" id="O09118"/>
    </source>
</evidence>
<evidence type="ECO:0000250" key="3">
    <source>
        <dbReference type="UniProtKB" id="O95631"/>
    </source>
</evidence>
<evidence type="ECO:0000255" key="4"/>
<evidence type="ECO:0000255" key="5">
    <source>
        <dbReference type="PROSITE-ProRule" id="PRU00295"/>
    </source>
</evidence>
<evidence type="ECO:0000255" key="6">
    <source>
        <dbReference type="PROSITE-ProRule" id="PRU00460"/>
    </source>
</evidence>
<evidence type="ECO:0000255" key="7">
    <source>
        <dbReference type="PROSITE-ProRule" id="PRU00466"/>
    </source>
</evidence>
<proteinExistence type="evidence at transcript level"/>